<sequence>MSRGRSFIFYFVLFLFFGSSALYSQVTGDLAGDRQALLDFLNNIIHPRSLAWNTSSPVCTTWPGVTCDIDGTRVTALHLPGASLLGVIPPGTISRLSELQILSLRSNGLRGPFPIDFLQLKKLKAISLGNNRFSGPLPSDYATWTNLTVLDLYSNRFNGSIPAGFANLTGLVSLNLAKNSFSGEIPDLNLPGLRRLNFSNNNLTGSIPNSLKRFGNSAFSGNNLVFENAPPPAVVSFKEQKKNGIYISEPAILGIAISVCFVIFFVIAVVIIVCYVKRQRKSETEPKPDKLKLAKKMPSEKEVSKLGKEKNIEDMEDKSEINKVMFFEGSNLAFNLEDLLIASAEFLGKGVFGMTYKAVLEDSKVIAVKRLKDIVVSRKDFKHQMEIVGNIKHENVAPLRAYVCSKEEKLMVYDYDSNGSLSLRLHGKNADEGHVPLNWETRLRFMIGVAKGLGHIHTQNLAHGNIKSSNVFMNSEGYGCISEAGLPLLTNPVVRADSSARSVLRYRAPEVTDTRRSTPESDIYSFGILMLETLTGRSIMDDRKEGIDLVVWVNDVISKQWTGEVFDLELVKTPNVEAKLLQMLQLGTSCTAMVPAKRPDMVKVVETLEEIERD</sequence>
<feature type="signal peptide" evidence="4">
    <location>
        <begin position="1"/>
        <end position="21"/>
    </location>
</feature>
<feature type="chain" id="PRO_0000403347" description="Inactive leucine-rich repeat receptor-like serine/threonine-protein kinase At5g24100">
    <location>
        <begin position="22"/>
        <end position="614"/>
    </location>
</feature>
<feature type="topological domain" description="Extracellular" evidence="4">
    <location>
        <begin position="22"/>
        <end position="251"/>
    </location>
</feature>
<feature type="transmembrane region" description="Helical" evidence="4">
    <location>
        <begin position="252"/>
        <end position="272"/>
    </location>
</feature>
<feature type="topological domain" description="Cytoplasmic" evidence="4">
    <location>
        <begin position="273"/>
        <end position="614"/>
    </location>
</feature>
<feature type="repeat" description="LRR 1">
    <location>
        <begin position="71"/>
        <end position="95"/>
    </location>
</feature>
<feature type="repeat" description="LRR 2">
    <location>
        <begin position="96"/>
        <end position="120"/>
    </location>
</feature>
<feature type="repeat" description="LRR 3">
    <location>
        <begin position="121"/>
        <end position="146"/>
    </location>
</feature>
<feature type="repeat" description="LRR 4">
    <location>
        <begin position="148"/>
        <end position="167"/>
    </location>
</feature>
<feature type="repeat" description="LRR 5">
    <location>
        <begin position="168"/>
        <end position="190"/>
    </location>
</feature>
<feature type="repeat" description="LRR 6">
    <location>
        <begin position="191"/>
        <end position="214"/>
    </location>
</feature>
<feature type="domain" description="Protein kinase" evidence="5">
    <location>
        <begin position="341"/>
        <end position="611"/>
    </location>
</feature>
<feature type="repeat" description="LRR 7">
    <location>
        <begin position="578"/>
        <end position="601"/>
    </location>
</feature>
<feature type="binding site" evidence="5">
    <location>
        <begin position="347"/>
        <end position="355"/>
    </location>
    <ligand>
        <name>ATP</name>
        <dbReference type="ChEBI" id="CHEBI:30616"/>
    </ligand>
</feature>
<feature type="binding site" evidence="5">
    <location>
        <position position="369"/>
    </location>
    <ligand>
        <name>ATP</name>
        <dbReference type="ChEBI" id="CHEBI:30616"/>
    </ligand>
</feature>
<feature type="modified residue" description="Phosphoserine" evidence="3">
    <location>
        <position position="343"/>
    </location>
</feature>
<feature type="modified residue" description="Phosphoserine" evidence="2">
    <location>
        <position position="420"/>
    </location>
</feature>
<feature type="modified residue" description="Phosphothreonine" evidence="2">
    <location>
        <position position="441"/>
    </location>
</feature>
<feature type="modified residue" description="Phosphothreonine" evidence="2">
    <location>
        <position position="514"/>
    </location>
</feature>
<feature type="modified residue" description="Phosphothreonine" evidence="2">
    <location>
        <position position="591"/>
    </location>
</feature>
<feature type="glycosylation site" description="N-linked (GlcNAc...) asparagine" evidence="4">
    <location>
        <position position="53"/>
    </location>
</feature>
<feature type="glycosylation site" description="N-linked (GlcNAc...) asparagine" evidence="4">
    <location>
        <position position="146"/>
    </location>
</feature>
<feature type="glycosylation site" description="N-linked (GlcNAc...) asparagine" evidence="4">
    <location>
        <position position="158"/>
    </location>
</feature>
<feature type="glycosylation site" description="N-linked (GlcNAc...) asparagine" evidence="4">
    <location>
        <position position="167"/>
    </location>
</feature>
<feature type="glycosylation site" description="N-linked (GlcNAc...) asparagine" evidence="4">
    <location>
        <position position="197"/>
    </location>
</feature>
<feature type="glycosylation site" description="N-linked (GlcNAc...) asparagine" evidence="4">
    <location>
        <position position="202"/>
    </location>
</feature>
<evidence type="ECO:0000250" key="1"/>
<evidence type="ECO:0000250" key="2">
    <source>
        <dbReference type="UniProtKB" id="Q94AG2"/>
    </source>
</evidence>
<evidence type="ECO:0000250" key="3">
    <source>
        <dbReference type="UniProtKB" id="Q94F62"/>
    </source>
</evidence>
<evidence type="ECO:0000255" key="4"/>
<evidence type="ECO:0000255" key="5">
    <source>
        <dbReference type="PROSITE-ProRule" id="PRU00159"/>
    </source>
</evidence>
<dbReference type="EMBL" id="AB010696">
    <property type="protein sequence ID" value="BAB11570.1"/>
    <property type="molecule type" value="Genomic_DNA"/>
</dbReference>
<dbReference type="EMBL" id="AB009056">
    <property type="protein sequence ID" value="BAB11570.1"/>
    <property type="status" value="JOINED"/>
    <property type="molecule type" value="Genomic_DNA"/>
</dbReference>
<dbReference type="EMBL" id="CP002688">
    <property type="protein sequence ID" value="AED93256.1"/>
    <property type="molecule type" value="Genomic_DNA"/>
</dbReference>
<dbReference type="EMBL" id="BT005989">
    <property type="protein sequence ID" value="AAO64924.1"/>
    <property type="molecule type" value="mRNA"/>
</dbReference>
<dbReference type="EMBL" id="FJ708782">
    <property type="protein sequence ID" value="ACN59373.1"/>
    <property type="molecule type" value="mRNA"/>
</dbReference>
<dbReference type="EMBL" id="AK227407">
    <property type="protein sequence ID" value="BAE99411.1"/>
    <property type="molecule type" value="mRNA"/>
</dbReference>
<dbReference type="RefSeq" id="NP_197798.1">
    <property type="nucleotide sequence ID" value="NM_122315.4"/>
</dbReference>
<dbReference type="SMR" id="Q9FL63"/>
<dbReference type="BioGRID" id="17750">
    <property type="interactions" value="51"/>
</dbReference>
<dbReference type="IntAct" id="Q9FL63">
    <property type="interactions" value="53"/>
</dbReference>
<dbReference type="STRING" id="3702.Q9FL63"/>
<dbReference type="GlyGen" id="Q9FL63">
    <property type="glycosylation" value="6 sites"/>
</dbReference>
<dbReference type="PaxDb" id="3702-AT5G24100.1"/>
<dbReference type="ProteomicsDB" id="243140"/>
<dbReference type="EnsemblPlants" id="AT5G24100.1">
    <property type="protein sequence ID" value="AT5G24100.1"/>
    <property type="gene ID" value="AT5G24100"/>
</dbReference>
<dbReference type="GeneID" id="832475"/>
<dbReference type="Gramene" id="AT5G24100.1">
    <property type="protein sequence ID" value="AT5G24100.1"/>
    <property type="gene ID" value="AT5G24100"/>
</dbReference>
<dbReference type="KEGG" id="ath:AT5G24100"/>
<dbReference type="Araport" id="AT5G24100"/>
<dbReference type="TAIR" id="AT5G24100"/>
<dbReference type="eggNOG" id="ENOG502QTFK">
    <property type="taxonomic scope" value="Eukaryota"/>
</dbReference>
<dbReference type="HOGENOM" id="CLU_000288_92_6_1"/>
<dbReference type="InParanoid" id="Q9FL63"/>
<dbReference type="OMA" id="KNGNEDH"/>
<dbReference type="PhylomeDB" id="Q9FL63"/>
<dbReference type="PRO" id="PR:Q9FL63"/>
<dbReference type="Proteomes" id="UP000006548">
    <property type="component" value="Chromosome 5"/>
</dbReference>
<dbReference type="ExpressionAtlas" id="Q9FL63">
    <property type="expression patterns" value="baseline and differential"/>
</dbReference>
<dbReference type="GO" id="GO:0005886">
    <property type="term" value="C:plasma membrane"/>
    <property type="evidence" value="ECO:0007669"/>
    <property type="project" value="UniProtKB-SubCell"/>
</dbReference>
<dbReference type="GO" id="GO:0005524">
    <property type="term" value="F:ATP binding"/>
    <property type="evidence" value="ECO:0007669"/>
    <property type="project" value="UniProtKB-KW"/>
</dbReference>
<dbReference type="GO" id="GO:0004672">
    <property type="term" value="F:protein kinase activity"/>
    <property type="evidence" value="ECO:0007669"/>
    <property type="project" value="InterPro"/>
</dbReference>
<dbReference type="FunFam" id="3.30.200.20:FF:000307">
    <property type="entry name" value="pollen receptor-like kinase 1"/>
    <property type="match status" value="1"/>
</dbReference>
<dbReference type="FunFam" id="3.80.10.10:FF:000234">
    <property type="entry name" value="Probable inactive receptor kinase RLK902"/>
    <property type="match status" value="1"/>
</dbReference>
<dbReference type="Gene3D" id="3.30.200.20">
    <property type="entry name" value="Phosphorylase Kinase, domain 1"/>
    <property type="match status" value="1"/>
</dbReference>
<dbReference type="Gene3D" id="3.80.10.10">
    <property type="entry name" value="Ribonuclease Inhibitor"/>
    <property type="match status" value="2"/>
</dbReference>
<dbReference type="Gene3D" id="1.10.510.10">
    <property type="entry name" value="Transferase(Phosphotransferase) domain 1"/>
    <property type="match status" value="1"/>
</dbReference>
<dbReference type="InterPro" id="IPR050994">
    <property type="entry name" value="At_inactive_RLKs"/>
</dbReference>
<dbReference type="InterPro" id="IPR011009">
    <property type="entry name" value="Kinase-like_dom_sf"/>
</dbReference>
<dbReference type="InterPro" id="IPR001611">
    <property type="entry name" value="Leu-rich_rpt"/>
</dbReference>
<dbReference type="InterPro" id="IPR032675">
    <property type="entry name" value="LRR_dom_sf"/>
</dbReference>
<dbReference type="InterPro" id="IPR013210">
    <property type="entry name" value="LRR_N_plant-typ"/>
</dbReference>
<dbReference type="InterPro" id="IPR000719">
    <property type="entry name" value="Prot_kinase_dom"/>
</dbReference>
<dbReference type="InterPro" id="IPR017441">
    <property type="entry name" value="Protein_kinase_ATP_BS"/>
</dbReference>
<dbReference type="InterPro" id="IPR001245">
    <property type="entry name" value="Ser-Thr/Tyr_kinase_cat_dom"/>
</dbReference>
<dbReference type="PANTHER" id="PTHR48010">
    <property type="entry name" value="OS05G0588300 PROTEIN"/>
    <property type="match status" value="1"/>
</dbReference>
<dbReference type="PANTHER" id="PTHR48010:SF14">
    <property type="entry name" value="PROTEIN KINASE DOMAIN-CONTAINING PROTEIN"/>
    <property type="match status" value="1"/>
</dbReference>
<dbReference type="Pfam" id="PF00560">
    <property type="entry name" value="LRR_1"/>
    <property type="match status" value="2"/>
</dbReference>
<dbReference type="Pfam" id="PF13855">
    <property type="entry name" value="LRR_8"/>
    <property type="match status" value="1"/>
</dbReference>
<dbReference type="Pfam" id="PF08263">
    <property type="entry name" value="LRRNT_2"/>
    <property type="match status" value="1"/>
</dbReference>
<dbReference type="Pfam" id="PF07714">
    <property type="entry name" value="PK_Tyr_Ser-Thr"/>
    <property type="match status" value="1"/>
</dbReference>
<dbReference type="SUPFAM" id="SSF52058">
    <property type="entry name" value="L domain-like"/>
    <property type="match status" value="1"/>
</dbReference>
<dbReference type="SUPFAM" id="SSF56112">
    <property type="entry name" value="Protein kinase-like (PK-like)"/>
    <property type="match status" value="1"/>
</dbReference>
<dbReference type="PROSITE" id="PS00107">
    <property type="entry name" value="PROTEIN_KINASE_ATP"/>
    <property type="match status" value="1"/>
</dbReference>
<dbReference type="PROSITE" id="PS50011">
    <property type="entry name" value="PROTEIN_KINASE_DOM"/>
    <property type="match status" value="1"/>
</dbReference>
<proteinExistence type="evidence at protein level"/>
<organism>
    <name type="scientific">Arabidopsis thaliana</name>
    <name type="common">Mouse-ear cress</name>
    <dbReference type="NCBI Taxonomy" id="3702"/>
    <lineage>
        <taxon>Eukaryota</taxon>
        <taxon>Viridiplantae</taxon>
        <taxon>Streptophyta</taxon>
        <taxon>Embryophyta</taxon>
        <taxon>Tracheophyta</taxon>
        <taxon>Spermatophyta</taxon>
        <taxon>Magnoliopsida</taxon>
        <taxon>eudicotyledons</taxon>
        <taxon>Gunneridae</taxon>
        <taxon>Pentapetalae</taxon>
        <taxon>rosids</taxon>
        <taxon>malvids</taxon>
        <taxon>Brassicales</taxon>
        <taxon>Brassicaceae</taxon>
        <taxon>Camelineae</taxon>
        <taxon>Arabidopsis</taxon>
    </lineage>
</organism>
<name>Y5410_ARATH</name>
<gene>
    <name type="ordered locus">At5g24100</name>
    <name type="ORF">MZF18.1</name>
</gene>
<reference key="1">
    <citation type="journal article" date="1998" name="DNA Res.">
        <title>Structural analysis of Arabidopsis thaliana chromosome 5. V. Sequence features of the regions of 1,381,565 bp covered by twenty one physically assigned P1 and TAC clones.</title>
        <authorList>
            <person name="Kaneko T."/>
            <person name="Kotani H."/>
            <person name="Nakamura Y."/>
            <person name="Sato S."/>
            <person name="Asamizu E."/>
            <person name="Miyajima N."/>
            <person name="Tabata S."/>
        </authorList>
    </citation>
    <scope>NUCLEOTIDE SEQUENCE [LARGE SCALE GENOMIC DNA]</scope>
    <source>
        <strain>cv. Columbia</strain>
    </source>
</reference>
<reference key="2">
    <citation type="journal article" date="1998" name="DNA Res.">
        <title>Structural analysis of Arabidopsis thaliana chromosome 5. IV. Sequence features of the regions of 1,456,315 bp covered by nineteen physically assigned P1 and TAC clones.</title>
        <authorList>
            <person name="Sato S."/>
            <person name="Kaneko T."/>
            <person name="Kotani H."/>
            <person name="Nakamura Y."/>
            <person name="Asamizu E."/>
            <person name="Miyajima N."/>
            <person name="Tabata S."/>
        </authorList>
    </citation>
    <scope>NUCLEOTIDE SEQUENCE [LARGE SCALE GENOMIC DNA]</scope>
    <source>
        <strain>cv. Columbia</strain>
    </source>
</reference>
<reference key="3">
    <citation type="journal article" date="2017" name="Plant J.">
        <title>Araport11: a complete reannotation of the Arabidopsis thaliana reference genome.</title>
        <authorList>
            <person name="Cheng C.Y."/>
            <person name="Krishnakumar V."/>
            <person name="Chan A.P."/>
            <person name="Thibaud-Nissen F."/>
            <person name="Schobel S."/>
            <person name="Town C.D."/>
        </authorList>
    </citation>
    <scope>GENOME REANNOTATION</scope>
    <source>
        <strain>cv. Columbia</strain>
    </source>
</reference>
<reference key="4">
    <citation type="journal article" date="2003" name="Science">
        <title>Empirical analysis of transcriptional activity in the Arabidopsis genome.</title>
        <authorList>
            <person name="Yamada K."/>
            <person name="Lim J."/>
            <person name="Dale J.M."/>
            <person name="Chen H."/>
            <person name="Shinn P."/>
            <person name="Palm C.J."/>
            <person name="Southwick A.M."/>
            <person name="Wu H.C."/>
            <person name="Kim C.J."/>
            <person name="Nguyen M."/>
            <person name="Pham P.K."/>
            <person name="Cheuk R.F."/>
            <person name="Karlin-Newmann G."/>
            <person name="Liu S.X."/>
            <person name="Lam B."/>
            <person name="Sakano H."/>
            <person name="Wu T."/>
            <person name="Yu G."/>
            <person name="Miranda M."/>
            <person name="Quach H.L."/>
            <person name="Tripp M."/>
            <person name="Chang C.H."/>
            <person name="Lee J.M."/>
            <person name="Toriumi M.J."/>
            <person name="Chan M.M."/>
            <person name="Tang C.C."/>
            <person name="Onodera C.S."/>
            <person name="Deng J.M."/>
            <person name="Akiyama K."/>
            <person name="Ansari Y."/>
            <person name="Arakawa T."/>
            <person name="Banh J."/>
            <person name="Banno F."/>
            <person name="Bowser L."/>
            <person name="Brooks S.Y."/>
            <person name="Carninci P."/>
            <person name="Chao Q."/>
            <person name="Choy N."/>
            <person name="Enju A."/>
            <person name="Goldsmith A.D."/>
            <person name="Gurjal M."/>
            <person name="Hansen N.F."/>
            <person name="Hayashizaki Y."/>
            <person name="Johnson-Hopson C."/>
            <person name="Hsuan V.W."/>
            <person name="Iida K."/>
            <person name="Karnes M."/>
            <person name="Khan S."/>
            <person name="Koesema E."/>
            <person name="Ishida J."/>
            <person name="Jiang P.X."/>
            <person name="Jones T."/>
            <person name="Kawai J."/>
            <person name="Kamiya A."/>
            <person name="Meyers C."/>
            <person name="Nakajima M."/>
            <person name="Narusaka M."/>
            <person name="Seki M."/>
            <person name="Sakurai T."/>
            <person name="Satou M."/>
            <person name="Tamse R."/>
            <person name="Vaysberg M."/>
            <person name="Wallender E.K."/>
            <person name="Wong C."/>
            <person name="Yamamura Y."/>
            <person name="Yuan S."/>
            <person name="Shinozaki K."/>
            <person name="Davis R.W."/>
            <person name="Theologis A."/>
            <person name="Ecker J.R."/>
        </authorList>
    </citation>
    <scope>NUCLEOTIDE SEQUENCE [LARGE SCALE MRNA]</scope>
    <source>
        <strain>cv. Columbia</strain>
    </source>
</reference>
<reference key="5">
    <citation type="journal article" date="2010" name="BMC Genomics">
        <title>Genome-wide cloning and sequence analysis of leucine-rich repeat receptor-like protein kinase genes in Arabidopsis thaliana.</title>
        <authorList>
            <person name="Gou X."/>
            <person name="He K."/>
            <person name="Yang H."/>
            <person name="Yuan T."/>
            <person name="Lin H."/>
            <person name="Clouse S.D."/>
            <person name="Li J."/>
        </authorList>
    </citation>
    <scope>NUCLEOTIDE SEQUENCE [LARGE SCALE MRNA]</scope>
    <source>
        <strain>cv. Columbia</strain>
    </source>
</reference>
<reference key="6">
    <citation type="submission" date="2006-07" db="EMBL/GenBank/DDBJ databases">
        <title>Large-scale analysis of RIKEN Arabidopsis full-length (RAFL) cDNAs.</title>
        <authorList>
            <person name="Totoki Y."/>
            <person name="Seki M."/>
            <person name="Ishida J."/>
            <person name="Nakajima M."/>
            <person name="Enju A."/>
            <person name="Kamiya A."/>
            <person name="Narusaka M."/>
            <person name="Shin-i T."/>
            <person name="Nakagawa M."/>
            <person name="Sakamoto N."/>
            <person name="Oishi K."/>
            <person name="Kohara Y."/>
            <person name="Kobayashi M."/>
            <person name="Toyoda A."/>
            <person name="Sakaki Y."/>
            <person name="Sakurai T."/>
            <person name="Iida K."/>
            <person name="Akiyama K."/>
            <person name="Satou M."/>
            <person name="Toyoda T."/>
            <person name="Konagaya A."/>
            <person name="Carninci P."/>
            <person name="Kawai J."/>
            <person name="Hayashizaki Y."/>
            <person name="Shinozaki K."/>
        </authorList>
    </citation>
    <scope>NUCLEOTIDE SEQUENCE [LARGE SCALE MRNA]</scope>
    <source>
        <strain>cv. Columbia</strain>
    </source>
</reference>
<keyword id="KW-0067">ATP-binding</keyword>
<keyword id="KW-1003">Cell membrane</keyword>
<keyword id="KW-0325">Glycoprotein</keyword>
<keyword id="KW-0433">Leucine-rich repeat</keyword>
<keyword id="KW-0472">Membrane</keyword>
<keyword id="KW-0547">Nucleotide-binding</keyword>
<keyword id="KW-0597">Phosphoprotein</keyword>
<keyword id="KW-0675">Receptor</keyword>
<keyword id="KW-1185">Reference proteome</keyword>
<keyword id="KW-0677">Repeat</keyword>
<keyword id="KW-0732">Signal</keyword>
<keyword id="KW-0812">Transmembrane</keyword>
<keyword id="KW-1133">Transmembrane helix</keyword>
<comment type="interaction">
    <interactant intactId="EBI-20657062">
        <id>Q9FL63</id>
    </interactant>
    <interactant intactId="EBI-20652666">
        <id>C0LGJ1</id>
        <label>At1g74360</label>
    </interactant>
    <organismsDiffer>false</organismsDiffer>
    <experiments>3</experiments>
</comment>
<comment type="interaction">
    <interactant intactId="EBI-20657062">
        <id>Q9FL63</id>
    </interactant>
    <interactant intactId="EBI-16955335">
        <id>C0LGS3</id>
        <label>At4g37250</label>
    </interactant>
    <organismsDiffer>false</organismsDiffer>
    <experiments>3</experiments>
</comment>
<comment type="interaction">
    <interactant intactId="EBI-20657062">
        <id>Q9FL63</id>
    </interactant>
    <interactant intactId="EBI-20665429">
        <id>C0LGQ4</id>
        <label>MDIS2</label>
    </interactant>
    <organismsDiffer>false</organismsDiffer>
    <experiments>2</experiments>
</comment>
<comment type="interaction">
    <interactant intactId="EBI-20657062">
        <id>Q9FL63</id>
    </interactant>
    <interactant intactId="EBI-17121474">
        <id>Q93ZS4</id>
        <label>NIK3</label>
    </interactant>
    <organismsDiffer>false</organismsDiffer>
    <experiments>3</experiments>
</comment>
<comment type="interaction">
    <interactant intactId="EBI-20657062">
        <id>Q9FL63</id>
    </interactant>
    <interactant intactId="EBI-16172949">
        <id>Q9ZVR7</id>
        <label>PSKR1</label>
    </interactant>
    <organismsDiffer>false</organismsDiffer>
    <experiments>3</experiments>
</comment>
<comment type="interaction">
    <interactant intactId="EBI-20657062">
        <id>Q9FL63</id>
    </interactant>
    <interactant intactId="EBI-16902047">
        <id>Q9FN37</id>
        <label>PSKR2</label>
    </interactant>
    <organismsDiffer>false</organismsDiffer>
    <experiments>2</experiments>
</comment>
<comment type="interaction">
    <interactant intactId="EBI-20657062">
        <id>Q9FL63</id>
    </interactant>
    <interactant intactId="EBI-20657109">
        <id>Q9M2R4</id>
        <label>T10K17.40</label>
    </interactant>
    <organismsDiffer>false</organismsDiffer>
    <experiments>3</experiments>
</comment>
<comment type="interaction">
    <interactant intactId="EBI-20657062">
        <id>Q9FL63</id>
    </interactant>
    <interactant intactId="EBI-2023970">
        <id>P43298</id>
        <label>TMK1</label>
    </interactant>
    <organismsDiffer>false</organismsDiffer>
    <experiments>3</experiments>
</comment>
<comment type="subcellular location">
    <subcellularLocation>
        <location evidence="1">Cell membrane</location>
        <topology evidence="1">Single-pass type I membrane protein</topology>
    </subcellularLocation>
</comment>
<comment type="domain">
    <text>The protein kinase domain is predicted to be catalytically inactive.</text>
</comment>
<comment type="similarity">
    <text evidence="5">Belongs to the protein kinase superfamily. Ser/Thr protein kinase family.</text>
</comment>
<accession>Q9FL63</accession>
<protein>
    <recommendedName>
        <fullName>Inactive leucine-rich repeat receptor-like serine/threonine-protein kinase At5g24100</fullName>
    </recommendedName>
</protein>